<proteinExistence type="inferred from homology"/>
<evidence type="ECO:0000250" key="1"/>
<evidence type="ECO:0000255" key="2">
    <source>
        <dbReference type="PROSITE-ProRule" id="PRU00541"/>
    </source>
</evidence>
<evidence type="ECO:0000255" key="3">
    <source>
        <dbReference type="PROSITE-ProRule" id="PRU00542"/>
    </source>
</evidence>
<evidence type="ECO:0000256" key="4">
    <source>
        <dbReference type="SAM" id="MobiDB-lite"/>
    </source>
</evidence>
<evidence type="ECO:0000305" key="5"/>
<organism>
    <name type="scientific">Scheffersomyces stipitis (strain ATCC 58785 / CBS 6054 / NBRC 10063 / NRRL Y-11545)</name>
    <name type="common">Yeast</name>
    <name type="synonym">Pichia stipitis</name>
    <dbReference type="NCBI Taxonomy" id="322104"/>
    <lineage>
        <taxon>Eukaryota</taxon>
        <taxon>Fungi</taxon>
        <taxon>Dikarya</taxon>
        <taxon>Ascomycota</taxon>
        <taxon>Saccharomycotina</taxon>
        <taxon>Pichiomycetes</taxon>
        <taxon>Debaryomycetaceae</taxon>
        <taxon>Scheffersomyces</taxon>
    </lineage>
</organism>
<protein>
    <recommendedName>
        <fullName>ATP-dependent RNA helicase DBP8</fullName>
        <ecNumber>3.6.4.13</ecNumber>
    </recommendedName>
</protein>
<accession>A3LP87</accession>
<reference key="1">
    <citation type="journal article" date="2007" name="Nat. Biotechnol.">
        <title>Genome sequence of the lignocellulose-bioconverting and xylose-fermenting yeast Pichia stipitis.</title>
        <authorList>
            <person name="Jeffries T.W."/>
            <person name="Grigoriev I.V."/>
            <person name="Grimwood J."/>
            <person name="Laplaza J.M."/>
            <person name="Aerts A."/>
            <person name="Salamov A."/>
            <person name="Schmutz J."/>
            <person name="Lindquist E."/>
            <person name="Dehal P."/>
            <person name="Shapiro H."/>
            <person name="Jin Y.-S."/>
            <person name="Passoth V."/>
            <person name="Richardson P.M."/>
        </authorList>
    </citation>
    <scope>NUCLEOTIDE SEQUENCE [LARGE SCALE GENOMIC DNA]</scope>
    <source>
        <strain>ATCC 58785 / CBS 6054 / NBRC 10063 / NRRL Y-11545</strain>
    </source>
</reference>
<keyword id="KW-0067">ATP-binding</keyword>
<keyword id="KW-0347">Helicase</keyword>
<keyword id="KW-0378">Hydrolase</keyword>
<keyword id="KW-0547">Nucleotide-binding</keyword>
<keyword id="KW-0539">Nucleus</keyword>
<keyword id="KW-1185">Reference proteome</keyword>
<keyword id="KW-0690">Ribosome biogenesis</keyword>
<keyword id="KW-0694">RNA-binding</keyword>
<keyword id="KW-0698">rRNA processing</keyword>
<name>DBP8_PICST</name>
<gene>
    <name type="primary">DBP8</name>
    <name type="ORF">PICST_40593</name>
</gene>
<dbReference type="EC" id="3.6.4.13"/>
<dbReference type="EMBL" id="CP000496">
    <property type="protein sequence ID" value="ABN64453.2"/>
    <property type="molecule type" value="Genomic_DNA"/>
</dbReference>
<dbReference type="RefSeq" id="XP_001382482.2">
    <property type="nucleotide sequence ID" value="XM_001382445.1"/>
</dbReference>
<dbReference type="SMR" id="A3LP87"/>
<dbReference type="FunCoup" id="A3LP87">
    <property type="interactions" value="891"/>
</dbReference>
<dbReference type="STRING" id="322104.A3LP87"/>
<dbReference type="GeneID" id="4837198"/>
<dbReference type="KEGG" id="pic:PICST_40593"/>
<dbReference type="eggNOG" id="KOG0340">
    <property type="taxonomic scope" value="Eukaryota"/>
</dbReference>
<dbReference type="HOGENOM" id="CLU_003041_1_1_1"/>
<dbReference type="InParanoid" id="A3LP87"/>
<dbReference type="OMA" id="IMIFTDT"/>
<dbReference type="OrthoDB" id="10261904at2759"/>
<dbReference type="Proteomes" id="UP000002258">
    <property type="component" value="Chromosome 2"/>
</dbReference>
<dbReference type="GO" id="GO:0005829">
    <property type="term" value="C:cytosol"/>
    <property type="evidence" value="ECO:0007669"/>
    <property type="project" value="TreeGrafter"/>
</dbReference>
<dbReference type="GO" id="GO:0005730">
    <property type="term" value="C:nucleolus"/>
    <property type="evidence" value="ECO:0007669"/>
    <property type="project" value="UniProtKB-SubCell"/>
</dbReference>
<dbReference type="GO" id="GO:0032040">
    <property type="term" value="C:small-subunit processome"/>
    <property type="evidence" value="ECO:0007669"/>
    <property type="project" value="EnsemblFungi"/>
</dbReference>
<dbReference type="GO" id="GO:0005524">
    <property type="term" value="F:ATP binding"/>
    <property type="evidence" value="ECO:0007669"/>
    <property type="project" value="UniProtKB-KW"/>
</dbReference>
<dbReference type="GO" id="GO:0016887">
    <property type="term" value="F:ATP hydrolysis activity"/>
    <property type="evidence" value="ECO:0007669"/>
    <property type="project" value="EnsemblFungi"/>
</dbReference>
<dbReference type="GO" id="GO:0003723">
    <property type="term" value="F:RNA binding"/>
    <property type="evidence" value="ECO:0007669"/>
    <property type="project" value="UniProtKB-KW"/>
</dbReference>
<dbReference type="GO" id="GO:0003724">
    <property type="term" value="F:RNA helicase activity"/>
    <property type="evidence" value="ECO:0007669"/>
    <property type="project" value="UniProtKB-EC"/>
</dbReference>
<dbReference type="GO" id="GO:0000480">
    <property type="term" value="P:endonucleolytic cleavage in 5'-ETS of tricistronic rRNA transcript (SSU-rRNA, 5.8S rRNA, LSU-rRNA)"/>
    <property type="evidence" value="ECO:0007669"/>
    <property type="project" value="EnsemblFungi"/>
</dbReference>
<dbReference type="GO" id="GO:0000447">
    <property type="term" value="P:endonucleolytic cleavage in ITS1 to separate SSU-rRNA from 5.8S rRNA and LSU-rRNA from tricistronic rRNA transcript (SSU-rRNA, 5.8S rRNA, LSU-rRNA)"/>
    <property type="evidence" value="ECO:0007669"/>
    <property type="project" value="EnsemblFungi"/>
</dbReference>
<dbReference type="GO" id="GO:0000472">
    <property type="term" value="P:endonucleolytic cleavage to generate mature 5'-end of SSU-rRNA from (SSU-rRNA, 5.8S rRNA, LSU-rRNA)"/>
    <property type="evidence" value="ECO:0007669"/>
    <property type="project" value="EnsemblFungi"/>
</dbReference>
<dbReference type="CDD" id="cd17955">
    <property type="entry name" value="DEADc_DDX49"/>
    <property type="match status" value="1"/>
</dbReference>
<dbReference type="CDD" id="cd18787">
    <property type="entry name" value="SF2_C_DEAD"/>
    <property type="match status" value="1"/>
</dbReference>
<dbReference type="Gene3D" id="3.40.50.300">
    <property type="entry name" value="P-loop containing nucleotide triphosphate hydrolases"/>
    <property type="match status" value="2"/>
</dbReference>
<dbReference type="InterPro" id="IPR011545">
    <property type="entry name" value="DEAD/DEAH_box_helicase_dom"/>
</dbReference>
<dbReference type="InterPro" id="IPR050079">
    <property type="entry name" value="DEAD_box_RNA_helicase"/>
</dbReference>
<dbReference type="InterPro" id="IPR014001">
    <property type="entry name" value="Helicase_ATP-bd"/>
</dbReference>
<dbReference type="InterPro" id="IPR001650">
    <property type="entry name" value="Helicase_C-like"/>
</dbReference>
<dbReference type="InterPro" id="IPR027417">
    <property type="entry name" value="P-loop_NTPase"/>
</dbReference>
<dbReference type="InterPro" id="IPR000629">
    <property type="entry name" value="RNA-helicase_DEAD-box_CS"/>
</dbReference>
<dbReference type="InterPro" id="IPR014014">
    <property type="entry name" value="RNA_helicase_DEAD_Q_motif"/>
</dbReference>
<dbReference type="PANTHER" id="PTHR47959:SF24">
    <property type="entry name" value="ATP-DEPENDENT RNA HELICASE"/>
    <property type="match status" value="1"/>
</dbReference>
<dbReference type="PANTHER" id="PTHR47959">
    <property type="entry name" value="ATP-DEPENDENT RNA HELICASE RHLE-RELATED"/>
    <property type="match status" value="1"/>
</dbReference>
<dbReference type="Pfam" id="PF00270">
    <property type="entry name" value="DEAD"/>
    <property type="match status" value="1"/>
</dbReference>
<dbReference type="Pfam" id="PF00271">
    <property type="entry name" value="Helicase_C"/>
    <property type="match status" value="1"/>
</dbReference>
<dbReference type="SMART" id="SM00487">
    <property type="entry name" value="DEXDc"/>
    <property type="match status" value="1"/>
</dbReference>
<dbReference type="SMART" id="SM00490">
    <property type="entry name" value="HELICc"/>
    <property type="match status" value="1"/>
</dbReference>
<dbReference type="SUPFAM" id="SSF52540">
    <property type="entry name" value="P-loop containing nucleoside triphosphate hydrolases"/>
    <property type="match status" value="1"/>
</dbReference>
<dbReference type="PROSITE" id="PS00039">
    <property type="entry name" value="DEAD_ATP_HELICASE"/>
    <property type="match status" value="1"/>
</dbReference>
<dbReference type="PROSITE" id="PS51192">
    <property type="entry name" value="HELICASE_ATP_BIND_1"/>
    <property type="match status" value="1"/>
</dbReference>
<dbReference type="PROSITE" id="PS51194">
    <property type="entry name" value="HELICASE_CTER"/>
    <property type="match status" value="1"/>
</dbReference>
<dbReference type="PROSITE" id="PS51195">
    <property type="entry name" value="Q_MOTIF"/>
    <property type="match status" value="1"/>
</dbReference>
<sequence length="445" mass="49232">MSFEDLGVSRWLSEALAAMKIHTPTAIQSGCIPKILSGHDCIGGAKTGSGKTIAFAAPMLTQWSEDPFGIFGLVLTPTRELALQIAEQFAALGASMNIKISVVVGGEDFVKQTLELQKKPHFVIATPGRLADHILNSGEETISGLRRIKYLVLDEADRLLSNSFGGDLERCFSVLPPSEKRQTCLFTATVTDAVRALKEKPPAQGKPPVFLHEVETVDQVAIPSTLSIKYVFVPSYVKEAYLNSILRLPQYEKSTAVIFVNRTTTAEVLRRTLRKLEFRVASLHSEMPQSERTNSVQRFKAGAARILIATDVASRGLDIPSVELVVNFDIPADPDDFIHRVGRTARAGRSGDAVTIIAEKDIDRIASIEERINKKMELLEEVTDDSVITDSLTATSVAKRESLMEMDKENFGEKRKINRKKRGLETEKIRVVKSKKEKSKKSLRQ</sequence>
<comment type="function">
    <text evidence="1">ATP-binding RNA helicase involved in 40S ribosomal subunit biogenesis and is required for the normal formation of 18S rRNAs through pre-rRNA processing at A0, A1 and A2 sites. Required for vegetative growth (By similarity).</text>
</comment>
<comment type="catalytic activity">
    <reaction>
        <text>ATP + H2O = ADP + phosphate + H(+)</text>
        <dbReference type="Rhea" id="RHEA:13065"/>
        <dbReference type="ChEBI" id="CHEBI:15377"/>
        <dbReference type="ChEBI" id="CHEBI:15378"/>
        <dbReference type="ChEBI" id="CHEBI:30616"/>
        <dbReference type="ChEBI" id="CHEBI:43474"/>
        <dbReference type="ChEBI" id="CHEBI:456216"/>
        <dbReference type="EC" id="3.6.4.13"/>
    </reaction>
</comment>
<comment type="subcellular location">
    <subcellularLocation>
        <location evidence="1">Nucleus</location>
        <location evidence="1">Nucleolus</location>
    </subcellularLocation>
</comment>
<comment type="domain">
    <text>The Q motif is unique to and characteristic of the DEAD box family of RNA helicases and controls ATP binding and hydrolysis.</text>
</comment>
<comment type="similarity">
    <text evidence="5">Belongs to the DEAD box helicase family. DDX49/DBP8 subfamily.</text>
</comment>
<feature type="chain" id="PRO_0000285151" description="ATP-dependent RNA helicase DBP8">
    <location>
        <begin position="1"/>
        <end position="445"/>
    </location>
</feature>
<feature type="domain" description="Helicase ATP-binding" evidence="2">
    <location>
        <begin position="32"/>
        <end position="208"/>
    </location>
</feature>
<feature type="domain" description="Helicase C-terminal" evidence="3">
    <location>
        <begin position="247"/>
        <end position="387"/>
    </location>
</feature>
<feature type="region of interest" description="Disordered" evidence="4">
    <location>
        <begin position="408"/>
        <end position="445"/>
    </location>
</feature>
<feature type="short sequence motif" description="Q motif">
    <location>
        <begin position="1"/>
        <end position="29"/>
    </location>
</feature>
<feature type="short sequence motif" description="DEAD box">
    <location>
        <begin position="154"/>
        <end position="157"/>
    </location>
</feature>
<feature type="compositionally biased region" description="Basic residues" evidence="4">
    <location>
        <begin position="431"/>
        <end position="445"/>
    </location>
</feature>
<feature type="binding site" evidence="2">
    <location>
        <begin position="45"/>
        <end position="52"/>
    </location>
    <ligand>
        <name>ATP</name>
        <dbReference type="ChEBI" id="CHEBI:30616"/>
    </ligand>
</feature>